<dbReference type="EC" id="2.4.2.60" evidence="1"/>
<dbReference type="EMBL" id="BN001302">
    <property type="protein sequence ID" value="CBF75074.1"/>
    <property type="molecule type" value="Genomic_DNA"/>
</dbReference>
<dbReference type="EMBL" id="AACD01000064">
    <property type="protein sequence ID" value="EAA59237.1"/>
    <property type="molecule type" value="Genomic_DNA"/>
</dbReference>
<dbReference type="RefSeq" id="XP_661532.1">
    <property type="nucleotide sequence ID" value="XM_656440.1"/>
</dbReference>
<dbReference type="SMR" id="G5EAZ2"/>
<dbReference type="FunCoup" id="G5EAZ2">
    <property type="interactions" value="817"/>
</dbReference>
<dbReference type="STRING" id="227321.G5EAZ2"/>
<dbReference type="EnsemblFungi" id="CBF75074">
    <property type="protein sequence ID" value="CBF75074"/>
    <property type="gene ID" value="ANIA_03928"/>
</dbReference>
<dbReference type="GeneID" id="2873351"/>
<dbReference type="KEGG" id="ani:ANIA_03928"/>
<dbReference type="VEuPathDB" id="FungiDB:AN3928"/>
<dbReference type="eggNOG" id="KOG2960">
    <property type="taxonomic scope" value="Eukaryota"/>
</dbReference>
<dbReference type="HOGENOM" id="CLU_053727_0_0_1"/>
<dbReference type="InParanoid" id="G5EAZ2"/>
<dbReference type="OMA" id="MFPRIVV"/>
<dbReference type="OrthoDB" id="410463at2759"/>
<dbReference type="Proteomes" id="UP000000560">
    <property type="component" value="Chromosome II"/>
</dbReference>
<dbReference type="GO" id="GO:0005829">
    <property type="term" value="C:cytosol"/>
    <property type="evidence" value="ECO:0007669"/>
    <property type="project" value="UniProtKB-UniRule"/>
</dbReference>
<dbReference type="GO" id="GO:0005634">
    <property type="term" value="C:nucleus"/>
    <property type="evidence" value="ECO:0007669"/>
    <property type="project" value="UniProtKB-SubCell"/>
</dbReference>
<dbReference type="GO" id="GO:0160205">
    <property type="term" value="F:cysteine-dependent adenosine diphosphate thiazole synthase activity"/>
    <property type="evidence" value="ECO:0007669"/>
    <property type="project" value="UniProtKB-EC"/>
</dbReference>
<dbReference type="GO" id="GO:0008198">
    <property type="term" value="F:ferrous iron binding"/>
    <property type="evidence" value="ECO:0007669"/>
    <property type="project" value="EnsemblFungi"/>
</dbReference>
<dbReference type="GO" id="GO:0005506">
    <property type="term" value="F:iron ion binding"/>
    <property type="evidence" value="ECO:0000318"/>
    <property type="project" value="GO_Central"/>
</dbReference>
<dbReference type="GO" id="GO:0000002">
    <property type="term" value="P:mitochondrial genome maintenance"/>
    <property type="evidence" value="ECO:0007669"/>
    <property type="project" value="EnsemblFungi"/>
</dbReference>
<dbReference type="GO" id="GO:0009228">
    <property type="term" value="P:thiamine biosynthetic process"/>
    <property type="evidence" value="ECO:0007669"/>
    <property type="project" value="UniProtKB-UniRule"/>
</dbReference>
<dbReference type="GO" id="GO:0052837">
    <property type="term" value="P:thiazole biosynthetic process"/>
    <property type="evidence" value="ECO:0000318"/>
    <property type="project" value="GO_Central"/>
</dbReference>
<dbReference type="Gene3D" id="6.10.250.2840">
    <property type="match status" value="1"/>
</dbReference>
<dbReference type="Gene3D" id="3.50.50.60">
    <property type="entry name" value="FAD/NAD(P)-binding domain"/>
    <property type="match status" value="1"/>
</dbReference>
<dbReference type="HAMAP" id="MF_03158">
    <property type="entry name" value="THI4"/>
    <property type="match status" value="1"/>
</dbReference>
<dbReference type="InterPro" id="IPR036188">
    <property type="entry name" value="FAD/NAD-bd_sf"/>
</dbReference>
<dbReference type="InterPro" id="IPR027495">
    <property type="entry name" value="Sti35"/>
</dbReference>
<dbReference type="InterPro" id="IPR002922">
    <property type="entry name" value="Thi4_fam"/>
</dbReference>
<dbReference type="NCBIfam" id="TIGR00292">
    <property type="entry name" value="sulfide-dependent adenosine diphosphate thiazole synthase"/>
    <property type="match status" value="1"/>
</dbReference>
<dbReference type="PANTHER" id="PTHR43422">
    <property type="entry name" value="THIAMINE THIAZOLE SYNTHASE"/>
    <property type="match status" value="1"/>
</dbReference>
<dbReference type="PANTHER" id="PTHR43422:SF3">
    <property type="entry name" value="THIAMINE THIAZOLE SYNTHASE"/>
    <property type="match status" value="1"/>
</dbReference>
<dbReference type="Pfam" id="PF01946">
    <property type="entry name" value="Thi4"/>
    <property type="match status" value="1"/>
</dbReference>
<dbReference type="SUPFAM" id="SSF51905">
    <property type="entry name" value="FAD/NAD(P)-binding domain"/>
    <property type="match status" value="1"/>
</dbReference>
<organism>
    <name type="scientific">Emericella nidulans (strain FGSC A4 / ATCC 38163 / CBS 112.46 / NRRL 194 / M139)</name>
    <name type="common">Aspergillus nidulans</name>
    <dbReference type="NCBI Taxonomy" id="227321"/>
    <lineage>
        <taxon>Eukaryota</taxon>
        <taxon>Fungi</taxon>
        <taxon>Dikarya</taxon>
        <taxon>Ascomycota</taxon>
        <taxon>Pezizomycotina</taxon>
        <taxon>Eurotiomycetes</taxon>
        <taxon>Eurotiomycetidae</taxon>
        <taxon>Eurotiales</taxon>
        <taxon>Aspergillaceae</taxon>
        <taxon>Aspergillus</taxon>
        <taxon>Aspergillus subgen. Nidulantes</taxon>
    </lineage>
</organism>
<keyword id="KW-0963">Cytoplasm</keyword>
<keyword id="KW-0408">Iron</keyword>
<keyword id="KW-0479">Metal-binding</keyword>
<keyword id="KW-0520">NAD</keyword>
<keyword id="KW-0539">Nucleus</keyword>
<keyword id="KW-1185">Reference proteome</keyword>
<keyword id="KW-0784">Thiamine biosynthesis</keyword>
<keyword id="KW-0808">Transferase</keyword>
<evidence type="ECO:0000255" key="1">
    <source>
        <dbReference type="HAMAP-Rule" id="MF_03158"/>
    </source>
</evidence>
<sequence>MSPPAAIFEPTVAPTGIKGKVVVPETATIPGDSQTKLLDHFGGKWDNFKFAPIRESQVSRAMTRRYFQDLDRYAESDVVIVGAGSCGLSTAYVLAKARPDLKIAIIEASVSPGGGAWLGGQLFSAMVMRRPAELFLNELGVPYEEDPDMPNYVVVKHASLFTSTLLSKVLSFPNVKLFNATCVEDLVTRPGPNGNAQEVQIAGVVTNWTLVTLHHDDHSCMDPNTINAPVIISTTGHDGPFGAFSAKRLVSMTTIDKLGGMRGLDMNSAEDAIVKNTREVAKGLIIGGMELSEIDGFNRMGPTFGAMVLSGVKAAEEALRVFDDRKRECAE</sequence>
<protein>
    <recommendedName>
        <fullName evidence="1">Thiamine thiazole synthase</fullName>
        <ecNumber evidence="1">2.4.2.60</ecNumber>
    </recommendedName>
    <alternativeName>
        <fullName evidence="1">Thiazole biosynthetic enzyme</fullName>
    </alternativeName>
</protein>
<comment type="function">
    <text evidence="1">Involved in biosynthesis of the thiamine precursor thiazole. Catalyzes the conversion of NAD and glycine to adenosine diphosphate 5-(2-hydroxyethyl)-4-methylthiazole-2-carboxylic acid (ADT), an adenylated thiazole intermediate. The reaction includes an iron-dependent sulfide transfer from a conserved cysteine residue of the protein to a thiazole intermediate. The enzyme can only undergo a single turnover, which suggests it is a suicide enzyme. May have additional roles in adaptation to various stress conditions and in DNA damage tolerance.</text>
</comment>
<comment type="catalytic activity">
    <reaction evidence="1">
        <text>[ADP-thiazole synthase]-L-cysteine + glycine + NAD(+) = [ADP-thiazole synthase]-dehydroalanine + ADP-5-ethyl-4-methylthiazole-2-carboxylate + nicotinamide + 3 H2O + 2 H(+)</text>
        <dbReference type="Rhea" id="RHEA:55708"/>
        <dbReference type="Rhea" id="RHEA-COMP:14264"/>
        <dbReference type="Rhea" id="RHEA-COMP:14265"/>
        <dbReference type="ChEBI" id="CHEBI:15377"/>
        <dbReference type="ChEBI" id="CHEBI:15378"/>
        <dbReference type="ChEBI" id="CHEBI:17154"/>
        <dbReference type="ChEBI" id="CHEBI:29950"/>
        <dbReference type="ChEBI" id="CHEBI:57305"/>
        <dbReference type="ChEBI" id="CHEBI:57540"/>
        <dbReference type="ChEBI" id="CHEBI:90873"/>
        <dbReference type="ChEBI" id="CHEBI:139151"/>
        <dbReference type="EC" id="2.4.2.60"/>
    </reaction>
</comment>
<comment type="cofactor">
    <cofactor evidence="1">
        <name>Fe cation</name>
        <dbReference type="ChEBI" id="CHEBI:24875"/>
    </cofactor>
    <text evidence="1">Binds 1 Fe cation per subunit.</text>
</comment>
<comment type="subunit">
    <text evidence="1">Homooctamer.</text>
</comment>
<comment type="subcellular location">
    <subcellularLocation>
        <location evidence="1">Cytoplasm</location>
    </subcellularLocation>
    <subcellularLocation>
        <location evidence="1">Nucleus</location>
    </subcellularLocation>
</comment>
<comment type="PTM">
    <text evidence="1">During the catalytic reaction, a sulfide is transferred from Cys-220 to a reaction intermediate, generating a dehydroalanine residue.</text>
</comment>
<comment type="similarity">
    <text evidence="1">Belongs to the THI4 family.</text>
</comment>
<accession>G5EAZ2</accession>
<accession>C8V649</accession>
<gene>
    <name evidence="1" type="primary">thiA</name>
    <name type="synonym">thi4</name>
    <name type="synonym">thiF</name>
    <name type="ORF">AN3928</name>
</gene>
<feature type="chain" id="PRO_0000415874" description="Thiamine thiazole synthase">
    <location>
        <begin position="1"/>
        <end position="331"/>
    </location>
</feature>
<feature type="binding site" evidence="1">
    <location>
        <position position="86"/>
    </location>
    <ligand>
        <name>substrate</name>
    </ligand>
</feature>
<feature type="binding site" evidence="1">
    <location>
        <begin position="107"/>
        <end position="108"/>
    </location>
    <ligand>
        <name>substrate</name>
    </ligand>
</feature>
<feature type="binding site" evidence="1">
    <location>
        <position position="115"/>
    </location>
    <ligand>
        <name>substrate</name>
    </ligand>
</feature>
<feature type="binding site" evidence="1">
    <location>
        <position position="183"/>
    </location>
    <ligand>
        <name>substrate</name>
    </ligand>
</feature>
<feature type="binding site" evidence="1">
    <location>
        <position position="222"/>
    </location>
    <ligand>
        <name>substrate</name>
    </ligand>
</feature>
<feature type="binding site" evidence="1">
    <location>
        <position position="237"/>
    </location>
    <ligand>
        <name>substrate</name>
    </ligand>
</feature>
<feature type="binding site" evidence="1">
    <location>
        <position position="289"/>
    </location>
    <ligand>
        <name>substrate</name>
    </ligand>
</feature>
<feature type="binding site" evidence="1">
    <location>
        <begin position="299"/>
        <end position="301"/>
    </location>
    <ligand>
        <name>substrate</name>
    </ligand>
</feature>
<feature type="modified residue" description="2,3-didehydroalanine (Cys)" evidence="1">
    <location>
        <position position="220"/>
    </location>
</feature>
<proteinExistence type="inferred from homology"/>
<name>THI4_EMENI</name>
<reference key="1">
    <citation type="journal article" date="2005" name="Nature">
        <title>Sequencing of Aspergillus nidulans and comparative analysis with A. fumigatus and A. oryzae.</title>
        <authorList>
            <person name="Galagan J.E."/>
            <person name="Calvo S.E."/>
            <person name="Cuomo C."/>
            <person name="Ma L.-J."/>
            <person name="Wortman J.R."/>
            <person name="Batzoglou S."/>
            <person name="Lee S.-I."/>
            <person name="Bastuerkmen M."/>
            <person name="Spevak C.C."/>
            <person name="Clutterbuck J."/>
            <person name="Kapitonov V."/>
            <person name="Jurka J."/>
            <person name="Scazzocchio C."/>
            <person name="Farman M.L."/>
            <person name="Butler J."/>
            <person name="Purcell S."/>
            <person name="Harris S."/>
            <person name="Braus G.H."/>
            <person name="Draht O."/>
            <person name="Busch S."/>
            <person name="D'Enfert C."/>
            <person name="Bouchier C."/>
            <person name="Goldman G.H."/>
            <person name="Bell-Pedersen D."/>
            <person name="Griffiths-Jones S."/>
            <person name="Doonan J.H."/>
            <person name="Yu J."/>
            <person name="Vienken K."/>
            <person name="Pain A."/>
            <person name="Freitag M."/>
            <person name="Selker E.U."/>
            <person name="Archer D.B."/>
            <person name="Penalva M.A."/>
            <person name="Oakley B.R."/>
            <person name="Momany M."/>
            <person name="Tanaka T."/>
            <person name="Kumagai T."/>
            <person name="Asai K."/>
            <person name="Machida M."/>
            <person name="Nierman W.C."/>
            <person name="Denning D.W."/>
            <person name="Caddick M.X."/>
            <person name="Hynes M."/>
            <person name="Paoletti M."/>
            <person name="Fischer R."/>
            <person name="Miller B.L."/>
            <person name="Dyer P.S."/>
            <person name="Sachs M.S."/>
            <person name="Osmani S.A."/>
            <person name="Birren B.W."/>
        </authorList>
    </citation>
    <scope>NUCLEOTIDE SEQUENCE [LARGE SCALE GENOMIC DNA]</scope>
    <source>
        <strain>FGSC A4 / ATCC 38163 / CBS 112.46 / NRRL 194 / M139</strain>
    </source>
</reference>
<reference key="2">
    <citation type="journal article" date="2009" name="Fungal Genet. Biol.">
        <title>The 2008 update of the Aspergillus nidulans genome annotation: a community effort.</title>
        <authorList>
            <person name="Wortman J.R."/>
            <person name="Gilsenan J.M."/>
            <person name="Joardar V."/>
            <person name="Deegan J."/>
            <person name="Clutterbuck J."/>
            <person name="Andersen M.R."/>
            <person name="Archer D."/>
            <person name="Bencina M."/>
            <person name="Braus G."/>
            <person name="Coutinho P."/>
            <person name="von Dohren H."/>
            <person name="Doonan J."/>
            <person name="Driessen A.J."/>
            <person name="Durek P."/>
            <person name="Espeso E."/>
            <person name="Fekete E."/>
            <person name="Flipphi M."/>
            <person name="Estrada C.G."/>
            <person name="Geysens S."/>
            <person name="Goldman G."/>
            <person name="de Groot P.W."/>
            <person name="Hansen K."/>
            <person name="Harris S.D."/>
            <person name="Heinekamp T."/>
            <person name="Helmstaedt K."/>
            <person name="Henrissat B."/>
            <person name="Hofmann G."/>
            <person name="Homan T."/>
            <person name="Horio T."/>
            <person name="Horiuchi H."/>
            <person name="James S."/>
            <person name="Jones M."/>
            <person name="Karaffa L."/>
            <person name="Karanyi Z."/>
            <person name="Kato M."/>
            <person name="Keller N."/>
            <person name="Kelly D.E."/>
            <person name="Kiel J.A."/>
            <person name="Kim J.M."/>
            <person name="van der Klei I.J."/>
            <person name="Klis F.M."/>
            <person name="Kovalchuk A."/>
            <person name="Krasevec N."/>
            <person name="Kubicek C.P."/>
            <person name="Liu B."/>
            <person name="Maccabe A."/>
            <person name="Meyer V."/>
            <person name="Mirabito P."/>
            <person name="Miskei M."/>
            <person name="Mos M."/>
            <person name="Mullins J."/>
            <person name="Nelson D.R."/>
            <person name="Nielsen J."/>
            <person name="Oakley B.R."/>
            <person name="Osmani S.A."/>
            <person name="Pakula T."/>
            <person name="Paszewski A."/>
            <person name="Paulsen I."/>
            <person name="Pilsyk S."/>
            <person name="Pocsi I."/>
            <person name="Punt P.J."/>
            <person name="Ram A.F."/>
            <person name="Ren Q."/>
            <person name="Robellet X."/>
            <person name="Robson G."/>
            <person name="Seiboth B."/>
            <person name="van Solingen P."/>
            <person name="Specht T."/>
            <person name="Sun J."/>
            <person name="Taheri-Talesh N."/>
            <person name="Takeshita N."/>
            <person name="Ussery D."/>
            <person name="vanKuyk P.A."/>
            <person name="Visser H."/>
            <person name="van de Vondervoort P.J."/>
            <person name="de Vries R.P."/>
            <person name="Walton J."/>
            <person name="Xiang X."/>
            <person name="Xiong Y."/>
            <person name="Zeng A.P."/>
            <person name="Brandt B.W."/>
            <person name="Cornell M.J."/>
            <person name="van den Hondel C.A."/>
            <person name="Visser J."/>
            <person name="Oliver S.G."/>
            <person name="Turner G."/>
        </authorList>
    </citation>
    <scope>GENOME REANNOTATION</scope>
    <source>
        <strain>FGSC A4 / ATCC 38163 / CBS 112.46 / NRRL 194 / M139</strain>
    </source>
</reference>